<organismHost>
    <name type="scientific">Homo sapiens</name>
    <name type="common">Human</name>
    <dbReference type="NCBI Taxonomy" id="9606"/>
</organismHost>
<feature type="signal peptide" evidence="2">
    <location>
        <begin position="1"/>
        <end position="27"/>
    </location>
</feature>
<feature type="chain" id="PRO_0000037442" description="Unique short US9 glycoprotein">
    <location>
        <begin position="28"/>
        <end position="247"/>
    </location>
</feature>
<feature type="topological domain" description="Lumenal" evidence="2">
    <location>
        <begin position="28"/>
        <end position="192"/>
    </location>
</feature>
<feature type="transmembrane region" description="Helical" evidence="2">
    <location>
        <begin position="193"/>
        <end position="213"/>
    </location>
</feature>
<feature type="topological domain" description="Cytoplasmic" evidence="2">
    <location>
        <begin position="214"/>
        <end position="247"/>
    </location>
</feature>
<feature type="domain" description="Ig-like H-type">
    <location>
        <begin position="72"/>
        <end position="168"/>
    </location>
</feature>
<feature type="glycosylation site" description="N-linked (GlcNAc...) asparagine; by host" evidence="2">
    <location>
        <position position="97"/>
    </location>
</feature>
<feature type="glycosylation site" description="N-linked (GlcNAc...) asparagine; by host" evidence="2">
    <location>
        <position position="158"/>
    </location>
</feature>
<feature type="disulfide bond" evidence="1">
    <location>
        <begin position="81"/>
        <end position="164"/>
    </location>
</feature>
<sequence>MILWSPSTCSFFWHWCLIAVSVLSSRSKESLRLSWSSDESSASSSSRICPLSNSKSVRLPQYPRGFGDVSGYRVSSSVSECYVQHGVLVAAWLVRGNFSDTAPRAYGTWGNERSATHFKVGAPQLENDGALRYETELPQVDARLSYVMLTVYPCSACNRSVLHCRPASRLPWLPLRVTPSDLERLFAERRYLTFLYVVLVQFVKHVALFSFGVQVACCVYLRWIRPWVRGRHRATGRTSREEEAKDD</sequence>
<reference key="1">
    <citation type="journal article" date="1986" name="J. Mol. Biol.">
        <title>Sequence of the short unique region, short repeats, and part of the long repeats of human cytomegalovirus.</title>
        <authorList>
            <person name="Weston K.M."/>
            <person name="Barrell B.G."/>
        </authorList>
    </citation>
    <scope>NUCLEOTIDE SEQUENCE [GENOMIC DNA]</scope>
</reference>
<reference key="2">
    <citation type="journal article" date="1990" name="Curr. Top. Microbiol. Immunol.">
        <title>Analysis of the protein-coding content of the sequence of human cytomegalovirus strain AD169.</title>
        <authorList>
            <person name="Chee M.S."/>
            <person name="Bankier A.T."/>
            <person name="Beck S."/>
            <person name="Bohni R."/>
            <person name="Brown C.M."/>
            <person name="Cerny R."/>
            <person name="Horsnell T."/>
            <person name="Hutchison C.A. III"/>
            <person name="Kouzarides T."/>
            <person name="Martignetti J.A."/>
            <person name="Preddie E."/>
            <person name="Satchwell S.C."/>
            <person name="Tomlinson P."/>
            <person name="Weston K.M."/>
            <person name="Barrell B.G."/>
        </authorList>
    </citation>
    <scope>NUCLEOTIDE SEQUENCE [LARGE SCALE GENOMIC DNA]</scope>
</reference>
<reference key="3">
    <citation type="journal article" date="1998" name="J. Virol.">
        <title>A novel human cytomegalovirus glycoprotein, gpUS9, which promotes cell-to-cell spread in polarized epithelial cells, colocalizes with the cytoskeletal proteins E-cadherin and F-actin.</title>
        <authorList>
            <person name="Maidji E."/>
            <person name="Tugizov S."/>
            <person name="Abenes G."/>
            <person name="Jones T."/>
            <person name="Pereira L."/>
        </authorList>
    </citation>
    <scope>FUNCTION</scope>
</reference>
<reference key="4">
    <citation type="journal article" date="2003" name="J. Gen. Virol.">
        <title>The human cytomegalovirus genome revisited: comparison with the chimpanzee cytomegalovirus genome.</title>
        <authorList>
            <person name="Davison A.J."/>
            <person name="Dolan A."/>
            <person name="Akter P."/>
            <person name="Addison C."/>
            <person name="Dargan D.J."/>
            <person name="Alcendor D.J."/>
            <person name="McGeoch D.J."/>
            <person name="Hayward G.S."/>
        </authorList>
    </citation>
    <scope>GENOME REANNOTATION</scope>
</reference>
<reference key="5">
    <citation type="journal article" date="2003" name="J. Gen. Virol.">
        <authorList>
            <person name="Davison A.J."/>
            <person name="Dolan A."/>
            <person name="Akter P."/>
            <person name="Addison C."/>
            <person name="Dargan D.J."/>
            <person name="Alcendor D.J."/>
            <person name="McGeoch D.J."/>
            <person name="Hayward G.S."/>
        </authorList>
    </citation>
    <scope>ERRATUM OF PUBMED:12533697</scope>
</reference>
<comment type="function">
    <text evidence="3">Influences cell-to-cell spread of virus in polarized cells. Promotes dissemination of virus across cell-cell junctions of polarized epithelial cells, maybe through the association with the cytoskeletal matrix.</text>
</comment>
<comment type="subcellular location">
    <subcellularLocation>
        <location>Host endoplasmic reticulum membrane</location>
        <topology>Single-pass type I membrane protein</topology>
    </subcellularLocation>
    <subcellularLocation>
        <location>Host cytoplasm</location>
        <location>Host cytoskeleton</location>
    </subcellularLocation>
    <subcellularLocation>
        <location>Host Golgi apparatus membrane</location>
        <topology>Single-pass type I membrane protein</topology>
    </subcellularLocation>
    <text>In polarized cells, colocalizes with F-actin in the cortical cytoskeleton which underlies lateral membranes.</text>
</comment>
<comment type="similarity">
    <text evidence="4">Belongs to the cytomegalovirus US6 family.</text>
</comment>
<organism>
    <name type="scientific">Human cytomegalovirus (strain AD169)</name>
    <name type="common">HHV-5</name>
    <name type="synonym">Human herpesvirus 5</name>
    <dbReference type="NCBI Taxonomy" id="10360"/>
    <lineage>
        <taxon>Viruses</taxon>
        <taxon>Duplodnaviria</taxon>
        <taxon>Heunggongvirae</taxon>
        <taxon>Peploviricota</taxon>
        <taxon>Herviviricetes</taxon>
        <taxon>Herpesvirales</taxon>
        <taxon>Orthoherpesviridae</taxon>
        <taxon>Betaherpesvirinae</taxon>
        <taxon>Cytomegalovirus</taxon>
        <taxon>Cytomegalovirus humanbeta5</taxon>
        <taxon>Human cytomegalovirus</taxon>
    </lineage>
</organism>
<accession>P09729</accession>
<accession>Q7M6G2</accession>
<proteinExistence type="inferred from homology"/>
<gene>
    <name type="primary">US9</name>
</gene>
<evidence type="ECO:0000250" key="1"/>
<evidence type="ECO:0000255" key="2"/>
<evidence type="ECO:0000269" key="3">
    <source>
    </source>
</evidence>
<evidence type="ECO:0000305" key="4"/>
<protein>
    <recommendedName>
        <fullName>Unique short US9 glycoprotein</fullName>
    </recommendedName>
    <alternativeName>
        <fullName>Protein HXLF3</fullName>
    </alternativeName>
    <alternativeName>
        <fullName>gpUS9</fullName>
    </alternativeName>
</protein>
<keyword id="KW-1015">Disulfide bond</keyword>
<keyword id="KW-0325">Glycoprotein</keyword>
<keyword id="KW-1035">Host cytoplasm</keyword>
<keyword id="KW-1037">Host cytoskeleton</keyword>
<keyword id="KW-1038">Host endoplasmic reticulum</keyword>
<keyword id="KW-1040">Host Golgi apparatus</keyword>
<keyword id="KW-1043">Host membrane</keyword>
<keyword id="KW-0393">Immunoglobulin domain</keyword>
<keyword id="KW-0472">Membrane</keyword>
<keyword id="KW-1185">Reference proteome</keyword>
<keyword id="KW-0732">Signal</keyword>
<keyword id="KW-0812">Transmembrane</keyword>
<keyword id="KW-1133">Transmembrane helix</keyword>
<dbReference type="EMBL" id="X17403">
    <property type="protein sequence ID" value="CAA35276.1"/>
    <property type="molecule type" value="Genomic_DNA"/>
</dbReference>
<dbReference type="EMBL" id="X04650">
    <property type="protein sequence ID" value="CAB37101.1"/>
    <property type="molecule type" value="Genomic_DNA"/>
</dbReference>
<dbReference type="EMBL" id="BK000394">
    <property type="protein sequence ID" value="DAA00226.1"/>
    <property type="molecule type" value="Genomic_DNA"/>
</dbReference>
<dbReference type="PIR" id="A27230">
    <property type="entry name" value="QQBEF1"/>
</dbReference>
<dbReference type="RefSeq" id="YP_081594.1">
    <property type="nucleotide sequence ID" value="NC_006273.2"/>
</dbReference>
<dbReference type="GlyCosmos" id="P09729">
    <property type="glycosylation" value="2 sites, No reported glycans"/>
</dbReference>
<dbReference type="DNASU" id="3077455"/>
<dbReference type="GeneID" id="3077455"/>
<dbReference type="KEGG" id="vg:3077455"/>
<dbReference type="Proteomes" id="UP000008991">
    <property type="component" value="Segment"/>
</dbReference>
<dbReference type="Proteomes" id="UP000008992">
    <property type="component" value="Segment"/>
</dbReference>
<dbReference type="GO" id="GO:0044167">
    <property type="term" value="C:host cell endoplasmic reticulum membrane"/>
    <property type="evidence" value="ECO:0007669"/>
    <property type="project" value="UniProtKB-SubCell"/>
</dbReference>
<dbReference type="GO" id="GO:0044178">
    <property type="term" value="C:host cell Golgi membrane"/>
    <property type="evidence" value="ECO:0007669"/>
    <property type="project" value="UniProtKB-SubCell"/>
</dbReference>
<dbReference type="GO" id="GO:0044163">
    <property type="term" value="C:host cytoskeleton"/>
    <property type="evidence" value="ECO:0007669"/>
    <property type="project" value="UniProtKB-SubCell"/>
</dbReference>
<dbReference type="GO" id="GO:0016020">
    <property type="term" value="C:membrane"/>
    <property type="evidence" value="ECO:0007669"/>
    <property type="project" value="UniProtKB-KW"/>
</dbReference>
<dbReference type="GO" id="GO:0052031">
    <property type="term" value="P:symbiont-mediated perturbation of host defense response"/>
    <property type="evidence" value="ECO:0007669"/>
    <property type="project" value="InterPro"/>
</dbReference>
<dbReference type="InterPro" id="IPR012536">
    <property type="entry name" value="CMV_US"/>
</dbReference>
<dbReference type="Pfam" id="PF08001">
    <property type="entry name" value="CMV_US"/>
    <property type="match status" value="1"/>
</dbReference>
<name>US09_HCMVA</name>